<comment type="function">
    <text evidence="1">Involved in the biosynthesis of the osmoprotectant glycine betaine. Catalyzes the irreversible oxidation of betaine aldehyde to the corresponding acid.</text>
</comment>
<comment type="catalytic activity">
    <reaction evidence="1">
        <text>betaine aldehyde + NAD(+) + H2O = glycine betaine + NADH + 2 H(+)</text>
        <dbReference type="Rhea" id="RHEA:15305"/>
        <dbReference type="ChEBI" id="CHEBI:15377"/>
        <dbReference type="ChEBI" id="CHEBI:15378"/>
        <dbReference type="ChEBI" id="CHEBI:15710"/>
        <dbReference type="ChEBI" id="CHEBI:17750"/>
        <dbReference type="ChEBI" id="CHEBI:57540"/>
        <dbReference type="ChEBI" id="CHEBI:57945"/>
        <dbReference type="EC" id="1.2.1.8"/>
    </reaction>
    <physiologicalReaction direction="left-to-right" evidence="1">
        <dbReference type="Rhea" id="RHEA:15306"/>
    </physiologicalReaction>
</comment>
<comment type="cofactor">
    <cofactor evidence="1">
        <name>K(+)</name>
        <dbReference type="ChEBI" id="CHEBI:29103"/>
    </cofactor>
    <text evidence="1">Binds 2 potassium ions per subunit.</text>
</comment>
<comment type="pathway">
    <text evidence="1">Amine and polyamine biosynthesis; betaine biosynthesis via choline pathway; betaine from betaine aldehyde: step 1/1.</text>
</comment>
<comment type="subunit">
    <text evidence="1">Dimer of dimers.</text>
</comment>
<comment type="similarity">
    <text evidence="1">Belongs to the aldehyde dehydrogenase family.</text>
</comment>
<proteinExistence type="inferred from homology"/>
<reference key="1">
    <citation type="submission" date="2008-04" db="EMBL/GenBank/DDBJ databases">
        <title>Complete sequence of Yersinia pseudotuberculosis PB1/+.</title>
        <authorList>
            <person name="Copeland A."/>
            <person name="Lucas S."/>
            <person name="Lapidus A."/>
            <person name="Glavina del Rio T."/>
            <person name="Dalin E."/>
            <person name="Tice H."/>
            <person name="Bruce D."/>
            <person name="Goodwin L."/>
            <person name="Pitluck S."/>
            <person name="Munk A.C."/>
            <person name="Brettin T."/>
            <person name="Detter J.C."/>
            <person name="Han C."/>
            <person name="Tapia R."/>
            <person name="Schmutz J."/>
            <person name="Larimer F."/>
            <person name="Land M."/>
            <person name="Hauser L."/>
            <person name="Challacombe J.F."/>
            <person name="Green L."/>
            <person name="Lindler L.E."/>
            <person name="Nikolich M.P."/>
            <person name="Richardson P."/>
        </authorList>
    </citation>
    <scope>NUCLEOTIDE SEQUENCE [LARGE SCALE GENOMIC DNA]</scope>
    <source>
        <strain>PB1/+</strain>
    </source>
</reference>
<protein>
    <recommendedName>
        <fullName evidence="1">Betaine aldehyde dehydrogenase</fullName>
        <shortName evidence="1">BADH</shortName>
        <ecNumber evidence="1">1.2.1.8</ecNumber>
    </recommendedName>
</protein>
<dbReference type="EC" id="1.2.1.8" evidence="1"/>
<dbReference type="EMBL" id="CP001048">
    <property type="protein sequence ID" value="ACC88251.1"/>
    <property type="molecule type" value="Genomic_DNA"/>
</dbReference>
<dbReference type="RefSeq" id="WP_012413568.1">
    <property type="nucleotide sequence ID" value="NZ_CP009780.1"/>
</dbReference>
<dbReference type="SMR" id="B2K8U5"/>
<dbReference type="KEGG" id="ypb:YPTS_1276"/>
<dbReference type="PATRIC" id="fig|502801.10.peg.625"/>
<dbReference type="UniPathway" id="UPA00529">
    <property type="reaction ID" value="UER00386"/>
</dbReference>
<dbReference type="GO" id="GO:0008802">
    <property type="term" value="F:betaine-aldehyde dehydrogenase (NAD+) activity"/>
    <property type="evidence" value="ECO:0007669"/>
    <property type="project" value="UniProtKB-UniRule"/>
</dbReference>
<dbReference type="GO" id="GO:0046872">
    <property type="term" value="F:metal ion binding"/>
    <property type="evidence" value="ECO:0007669"/>
    <property type="project" value="UniProtKB-KW"/>
</dbReference>
<dbReference type="GO" id="GO:0019285">
    <property type="term" value="P:glycine betaine biosynthetic process from choline"/>
    <property type="evidence" value="ECO:0007669"/>
    <property type="project" value="UniProtKB-UniRule"/>
</dbReference>
<dbReference type="CDD" id="cd07090">
    <property type="entry name" value="ALDH_F9_TMBADH"/>
    <property type="match status" value="1"/>
</dbReference>
<dbReference type="FunFam" id="3.40.309.10:FF:000014">
    <property type="entry name" value="NAD/NADP-dependent betaine aldehyde dehydrogenase"/>
    <property type="match status" value="1"/>
</dbReference>
<dbReference type="FunFam" id="3.40.605.10:FF:000007">
    <property type="entry name" value="NAD/NADP-dependent betaine aldehyde dehydrogenase"/>
    <property type="match status" value="1"/>
</dbReference>
<dbReference type="Gene3D" id="3.40.605.10">
    <property type="entry name" value="Aldehyde Dehydrogenase, Chain A, domain 1"/>
    <property type="match status" value="1"/>
</dbReference>
<dbReference type="Gene3D" id="3.40.309.10">
    <property type="entry name" value="Aldehyde Dehydrogenase, Chain A, domain 2"/>
    <property type="match status" value="1"/>
</dbReference>
<dbReference type="HAMAP" id="MF_00804">
    <property type="entry name" value="BADH"/>
    <property type="match status" value="1"/>
</dbReference>
<dbReference type="InterPro" id="IPR016161">
    <property type="entry name" value="Ald_DH/histidinol_DH"/>
</dbReference>
<dbReference type="InterPro" id="IPR016163">
    <property type="entry name" value="Ald_DH_C"/>
</dbReference>
<dbReference type="InterPro" id="IPR016160">
    <property type="entry name" value="Ald_DH_CS_CYS"/>
</dbReference>
<dbReference type="InterPro" id="IPR029510">
    <property type="entry name" value="Ald_DH_CS_GLU"/>
</dbReference>
<dbReference type="InterPro" id="IPR016162">
    <property type="entry name" value="Ald_DH_N"/>
</dbReference>
<dbReference type="InterPro" id="IPR015590">
    <property type="entry name" value="Aldehyde_DH_dom"/>
</dbReference>
<dbReference type="InterPro" id="IPR011264">
    <property type="entry name" value="BADH"/>
</dbReference>
<dbReference type="NCBIfam" id="TIGR01804">
    <property type="entry name" value="BADH"/>
    <property type="match status" value="1"/>
</dbReference>
<dbReference type="NCBIfam" id="NF009725">
    <property type="entry name" value="PRK13252.1"/>
    <property type="match status" value="1"/>
</dbReference>
<dbReference type="PANTHER" id="PTHR11699">
    <property type="entry name" value="ALDEHYDE DEHYDROGENASE-RELATED"/>
    <property type="match status" value="1"/>
</dbReference>
<dbReference type="Pfam" id="PF00171">
    <property type="entry name" value="Aldedh"/>
    <property type="match status" value="1"/>
</dbReference>
<dbReference type="SUPFAM" id="SSF53720">
    <property type="entry name" value="ALDH-like"/>
    <property type="match status" value="1"/>
</dbReference>
<dbReference type="PROSITE" id="PS00070">
    <property type="entry name" value="ALDEHYDE_DEHYDR_CYS"/>
    <property type="match status" value="1"/>
</dbReference>
<dbReference type="PROSITE" id="PS00687">
    <property type="entry name" value="ALDEHYDE_DEHYDR_GLU"/>
    <property type="match status" value="1"/>
</dbReference>
<feature type="chain" id="PRO_1000133962" description="Betaine aldehyde dehydrogenase">
    <location>
        <begin position="1"/>
        <end position="490"/>
    </location>
</feature>
<feature type="active site" description="Charge relay system" evidence="1">
    <location>
        <position position="162"/>
    </location>
</feature>
<feature type="active site" description="Proton acceptor" evidence="1">
    <location>
        <position position="252"/>
    </location>
</feature>
<feature type="active site" description="Nucleophile" evidence="1">
    <location>
        <position position="286"/>
    </location>
</feature>
<feature type="active site" description="Charge relay system" evidence="1">
    <location>
        <position position="464"/>
    </location>
</feature>
<feature type="binding site" evidence="1">
    <location>
        <position position="93"/>
    </location>
    <ligand>
        <name>K(+)</name>
        <dbReference type="ChEBI" id="CHEBI:29103"/>
        <label>1</label>
    </ligand>
</feature>
<feature type="binding site" evidence="1">
    <location>
        <begin position="150"/>
        <end position="152"/>
    </location>
    <ligand>
        <name>NAD(+)</name>
        <dbReference type="ChEBI" id="CHEBI:57540"/>
    </ligand>
</feature>
<feature type="binding site" evidence="1">
    <location>
        <begin position="176"/>
        <end position="179"/>
    </location>
    <ligand>
        <name>NAD(+)</name>
        <dbReference type="ChEBI" id="CHEBI:57540"/>
    </ligand>
</feature>
<feature type="binding site" evidence="1">
    <location>
        <position position="180"/>
    </location>
    <ligand>
        <name>K(+)</name>
        <dbReference type="ChEBI" id="CHEBI:29103"/>
        <label>1</label>
    </ligand>
</feature>
<feature type="binding site" evidence="1">
    <location>
        <begin position="230"/>
        <end position="233"/>
    </location>
    <ligand>
        <name>NAD(+)</name>
        <dbReference type="ChEBI" id="CHEBI:57540"/>
    </ligand>
</feature>
<feature type="binding site" evidence="1">
    <location>
        <position position="246"/>
    </location>
    <ligand>
        <name>K(+)</name>
        <dbReference type="ChEBI" id="CHEBI:29103"/>
        <label>2</label>
    </ligand>
</feature>
<feature type="binding site" evidence="1">
    <location>
        <position position="254"/>
    </location>
    <ligand>
        <name>NAD(+)</name>
        <dbReference type="ChEBI" id="CHEBI:57540"/>
    </ligand>
</feature>
<feature type="binding site" description="covalent" evidence="1">
    <location>
        <position position="286"/>
    </location>
    <ligand>
        <name>NAD(+)</name>
        <dbReference type="ChEBI" id="CHEBI:57540"/>
    </ligand>
</feature>
<feature type="binding site" evidence="1">
    <location>
        <position position="387"/>
    </location>
    <ligand>
        <name>NAD(+)</name>
        <dbReference type="ChEBI" id="CHEBI:57540"/>
    </ligand>
</feature>
<feature type="binding site" evidence="1">
    <location>
        <position position="457"/>
    </location>
    <ligand>
        <name>K(+)</name>
        <dbReference type="ChEBI" id="CHEBI:29103"/>
        <label>2</label>
    </ligand>
</feature>
<feature type="binding site" evidence="1">
    <location>
        <position position="460"/>
    </location>
    <ligand>
        <name>K(+)</name>
        <dbReference type="ChEBI" id="CHEBI:29103"/>
        <label>2</label>
    </ligand>
</feature>
<feature type="site" description="Seems to be a necessary countercharge to the potassium cations" evidence="1">
    <location>
        <position position="248"/>
    </location>
</feature>
<feature type="modified residue" description="Cysteine sulfenic acid (-SOH)" evidence="1">
    <location>
        <position position="286"/>
    </location>
</feature>
<organism>
    <name type="scientific">Yersinia pseudotuberculosis serotype IB (strain PB1/+)</name>
    <dbReference type="NCBI Taxonomy" id="502801"/>
    <lineage>
        <taxon>Bacteria</taxon>
        <taxon>Pseudomonadati</taxon>
        <taxon>Pseudomonadota</taxon>
        <taxon>Gammaproteobacteria</taxon>
        <taxon>Enterobacterales</taxon>
        <taxon>Yersiniaceae</taxon>
        <taxon>Yersinia</taxon>
    </lineage>
</organism>
<sequence>MSRYGLQKLYINGAYTDSTSGDTFDAVNPANGECIAQLQAANAQDVDKAVAAAKQGQPVWAAMTAMERSRILRRAVDILRDRNDELAAIETADTGKPLSETRSVDIVTGADVLEYYAGLIPALEGQQIPLRGSAFVYTRREPLGVVAGIGAWNYPLQIALWKSAPALAAGNAMIFKPSEVTSLTALKLAGIYTEAGLPAGVFNVLTGSGDQVGQMLTEHPGIAKVSFTGGIASGKKVMANAAGSTLKDVTMELGGKSPLIIFADADLDKAADIAMMANFYSSGQVCTNGTRVFVPQALQAAFEQKIVERVKRIHIGDPSDERTNFGPLVSFQHRDSVMRYIDSGKREGATLLIGGYSLTEGALAHGAYVAPTVFTHCRDDMQIVREEIFGPVMSILSYQSEEEVIRRANDTEYGLAAGVVTQDLNRAHRVIHQLQAGICWINTWGESAPEMPVGGYKHSGVGRENGISTLEHYTQIKSIQVELSSFNSVF</sequence>
<evidence type="ECO:0000255" key="1">
    <source>
        <dbReference type="HAMAP-Rule" id="MF_00804"/>
    </source>
</evidence>
<name>BETB_YERPB</name>
<keyword id="KW-0479">Metal-binding</keyword>
<keyword id="KW-0520">NAD</keyword>
<keyword id="KW-0521">NADP</keyword>
<keyword id="KW-0558">Oxidation</keyword>
<keyword id="KW-0560">Oxidoreductase</keyword>
<keyword id="KW-0630">Potassium</keyword>
<gene>
    <name evidence="1" type="primary">betB</name>
    <name type="ordered locus">YPTS_1276</name>
</gene>
<accession>B2K8U5</accession>